<proteinExistence type="inferred from homology"/>
<gene>
    <name type="primary">qumA</name>
</gene>
<feature type="chain" id="PRO_0000205341" description="Probable quinate dehydrogenase (quinone)">
    <location>
        <begin position="1"/>
        <end position="790"/>
    </location>
</feature>
<feature type="transmembrane region" description="Helical" evidence="2">
    <location>
        <begin position="22"/>
        <end position="42"/>
    </location>
</feature>
<feature type="transmembrane region" description="Helical" evidence="2">
    <location>
        <begin position="48"/>
        <end position="68"/>
    </location>
</feature>
<feature type="transmembrane region" description="Helical" evidence="2">
    <location>
        <begin position="77"/>
        <end position="94"/>
    </location>
</feature>
<feature type="transmembrane region" description="Helical" evidence="2">
    <location>
        <begin position="106"/>
        <end position="126"/>
    </location>
</feature>
<feature type="region of interest" description="Disordered" evidence="3">
    <location>
        <begin position="171"/>
        <end position="200"/>
    </location>
</feature>
<feature type="compositionally biased region" description="Low complexity" evidence="3">
    <location>
        <begin position="174"/>
        <end position="187"/>
    </location>
</feature>
<organism>
    <name type="scientific">Xanthomonas campestris pv. juglandis</name>
    <name type="common">Xanthomonas arboricola pv. juglandis</name>
    <dbReference type="NCBI Taxonomy" id="195709"/>
    <lineage>
        <taxon>Bacteria</taxon>
        <taxon>Pseudomonadati</taxon>
        <taxon>Pseudomonadota</taxon>
        <taxon>Gammaproteobacteria</taxon>
        <taxon>Lysobacterales</taxon>
        <taxon>Lysobacteraceae</taxon>
        <taxon>Xanthomonas</taxon>
    </lineage>
</organism>
<dbReference type="EC" id="1.1.5.8"/>
<dbReference type="EMBL" id="AF109471">
    <property type="protein sequence ID" value="AAD38453.1"/>
    <property type="molecule type" value="Genomic_DNA"/>
</dbReference>
<dbReference type="SMR" id="Q9XD78"/>
<dbReference type="UniPathway" id="UPA00088">
    <property type="reaction ID" value="UER00177"/>
</dbReference>
<dbReference type="GO" id="GO:0030288">
    <property type="term" value="C:outer membrane-bounded periplasmic space"/>
    <property type="evidence" value="ECO:0007669"/>
    <property type="project" value="InterPro"/>
</dbReference>
<dbReference type="GO" id="GO:0005886">
    <property type="term" value="C:plasma membrane"/>
    <property type="evidence" value="ECO:0007669"/>
    <property type="project" value="UniProtKB-SubCell"/>
</dbReference>
<dbReference type="GO" id="GO:0047519">
    <property type="term" value="F:quinate dehydrogenase (quinone) activity"/>
    <property type="evidence" value="ECO:0007669"/>
    <property type="project" value="UniProtKB-EC"/>
</dbReference>
<dbReference type="GO" id="GO:0048038">
    <property type="term" value="F:quinone binding"/>
    <property type="evidence" value="ECO:0007669"/>
    <property type="project" value="InterPro"/>
</dbReference>
<dbReference type="GO" id="GO:0008876">
    <property type="term" value="F:quinoprotein glucose dehydrogenase activity"/>
    <property type="evidence" value="ECO:0007669"/>
    <property type="project" value="TreeGrafter"/>
</dbReference>
<dbReference type="GO" id="GO:0046279">
    <property type="term" value="P:3,4-dihydroxybenzoate biosynthetic process"/>
    <property type="evidence" value="ECO:0007669"/>
    <property type="project" value="UniProtKB-UniPathway"/>
</dbReference>
<dbReference type="GO" id="GO:0019630">
    <property type="term" value="P:quinate metabolic process"/>
    <property type="evidence" value="ECO:0007669"/>
    <property type="project" value="UniProtKB-KW"/>
</dbReference>
<dbReference type="CDD" id="cd10280">
    <property type="entry name" value="PQQ_mGDH"/>
    <property type="match status" value="1"/>
</dbReference>
<dbReference type="Gene3D" id="2.140.10.10">
    <property type="entry name" value="Quinoprotein alcohol dehydrogenase-like superfamily"/>
    <property type="match status" value="1"/>
</dbReference>
<dbReference type="InterPro" id="IPR018391">
    <property type="entry name" value="PQQ_b-propeller_rpt"/>
</dbReference>
<dbReference type="InterPro" id="IPR017511">
    <property type="entry name" value="PQQ_mDH"/>
</dbReference>
<dbReference type="InterPro" id="IPR002372">
    <property type="entry name" value="PQQ_rpt_dom"/>
</dbReference>
<dbReference type="InterPro" id="IPR011047">
    <property type="entry name" value="Quinoprotein_ADH-like_sf"/>
</dbReference>
<dbReference type="InterPro" id="IPR001479">
    <property type="entry name" value="Quinoprotein_DH_CS"/>
</dbReference>
<dbReference type="NCBIfam" id="TIGR03074">
    <property type="entry name" value="PQQ_membr_DH"/>
    <property type="match status" value="1"/>
</dbReference>
<dbReference type="PANTHER" id="PTHR32303">
    <property type="entry name" value="QUINOPROTEIN ALCOHOL DEHYDROGENASE (CYTOCHROME C)"/>
    <property type="match status" value="1"/>
</dbReference>
<dbReference type="PANTHER" id="PTHR32303:SF4">
    <property type="entry name" value="QUINOPROTEIN GLUCOSE DEHYDROGENASE"/>
    <property type="match status" value="1"/>
</dbReference>
<dbReference type="Pfam" id="PF01011">
    <property type="entry name" value="PQQ"/>
    <property type="match status" value="1"/>
</dbReference>
<dbReference type="SMART" id="SM00564">
    <property type="entry name" value="PQQ"/>
    <property type="match status" value="5"/>
</dbReference>
<dbReference type="SUPFAM" id="SSF50998">
    <property type="entry name" value="Quinoprotein alcohol dehydrogenase-like"/>
    <property type="match status" value="1"/>
</dbReference>
<dbReference type="PROSITE" id="PS00364">
    <property type="entry name" value="BACTERIAL_PQQ_2"/>
    <property type="match status" value="1"/>
</dbReference>
<sequence length="790" mass="82897">MLIALVGLIFLLGGARLASLGGSWYFLLMGLATALAGVLIVLRRPAGALVYGVAFALTLVWALWDAGLEFWPLVSRLMLPAAFAVLVALAWPALRRSRALPTGRTAYGVATVLALAVVAGIGGMFVPHPPVAGNAGPGMTAVPPGSVQQNWSAYGNTDGGSRFAALDQINRSNGRPAAGSPGPTTPGEIANSDGNGAEDQLTPLQVGEKVFLCTPHNNLIALDASTGKQLWRREINATSSVWQRCRGLGYFDADAALPAPSVANPSPIAAVTVAQGANCRRRLFTNTIDGRLIAVDADTGAFCQGFGSNGQVDLKAGLGAAPDPFYQLTSPPLVAGTTVVGGRTRADDNVQTDMPGGVVRGSMWSPVRSAGLDPGNPHDRQAPAAGSSYVRSTPNVWAPMSYDAAMNTVFLPLGGPSTDLYGAERTALDHRYGASVLALDATTGAEKWVYQTVHNDLWDFDLPMQPSLIDFPNQDGSHTPAVVIGTKAGQIYVLDRATGKPLTEVREVPVKGSDIAHEQYAPTQPLSVGMPQIGTKHLTESDMWGATAMDQMLCRIAFKQMRYEGLYTAPGTDVSLSFPGSLGGMNWGGLSTDPVHDVVFANDMRLGLWVQMIPADTRKAEAAGGGEAVNTGMGAVPLKGTPYAVNKNRFLSALGIPCQAPPYGTLSAIDLKTRSIAWQVPVGTVQDTGPFGIKMHLPIPIGMPTLGGTLSTQGGLVFIAGTQDYYLRAFDSATGKELWKGRLPVGSQGGPITYVSHKTGKQYVVISAGGARQSPDRGDYVIAYSLPDAH</sequence>
<evidence type="ECO:0000250" key="1"/>
<evidence type="ECO:0000255" key="2"/>
<evidence type="ECO:0000256" key="3">
    <source>
        <dbReference type="SAM" id="MobiDB-lite"/>
    </source>
</evidence>
<evidence type="ECO:0000305" key="4"/>
<reference key="1">
    <citation type="journal article" date="1999" name="J. Appl. Microbiol.">
        <title>A gene involved in quinate metabolism is specific to one DNA homology group of Xanthomonas campestris.</title>
        <authorList>
            <person name="Lee Y.-A."/>
            <person name="Lo Y.-C."/>
            <person name="Yu P.-P."/>
        </authorList>
    </citation>
    <scope>NUCLEOTIDE SEQUENCE [GENOMIC DNA]</scope>
    <source>
        <strain>C5</strain>
    </source>
</reference>
<keyword id="KW-1003">Cell membrane</keyword>
<keyword id="KW-0472">Membrane</keyword>
<keyword id="KW-0560">Oxidoreductase</keyword>
<keyword id="KW-0634">PQQ</keyword>
<keyword id="KW-0672">Quinate metabolism</keyword>
<keyword id="KW-0812">Transmembrane</keyword>
<keyword id="KW-1133">Transmembrane helix</keyword>
<name>QUIA_XANCJ</name>
<accession>Q9XD78</accession>
<comment type="catalytic activity">
    <reaction>
        <text>L-quinate + a quinone = 3-dehydroquinate + a quinol</text>
        <dbReference type="Rhea" id="RHEA:23672"/>
        <dbReference type="ChEBI" id="CHEBI:24646"/>
        <dbReference type="ChEBI" id="CHEBI:29751"/>
        <dbReference type="ChEBI" id="CHEBI:32364"/>
        <dbReference type="ChEBI" id="CHEBI:132124"/>
        <dbReference type="EC" id="1.1.5.8"/>
    </reaction>
</comment>
<comment type="cofactor">
    <cofactor evidence="1">
        <name>pyrroloquinoline quinone</name>
        <dbReference type="ChEBI" id="CHEBI:58442"/>
    </cofactor>
</comment>
<comment type="pathway">
    <text>Aromatic compound metabolism; 3,4-dihydroxybenzoate biosynthesis; 3-dehydroquinate from D-quinate (PQQ route): step 1/1.</text>
</comment>
<comment type="subcellular location">
    <subcellularLocation>
        <location evidence="4">Cell membrane</location>
        <topology evidence="4">Multi-pass membrane protein</topology>
    </subcellularLocation>
</comment>
<comment type="similarity">
    <text evidence="4">Belongs to the bacterial PQQ dehydrogenase family.</text>
</comment>
<protein>
    <recommendedName>
        <fullName>Probable quinate dehydrogenase (quinone)</fullName>
        <ecNumber>1.1.5.8</ecNumber>
    </recommendedName>
</protein>